<name>NRAM_I57A4</name>
<sequence length="469" mass="52005">MNPNQKTITIGSVSLTIATVCFLMQIAILATTVTLHFKQHECDSPASNQVMPCEPIIIERNITEIVYLNNTTIEKEICPEVVEYRNWSKPQCQITGFAPFSKDNSIRLSAGGDIWVTREPYVSCDPGKCYQFALGQGTTLDNKHSNGTIHDRIPHRTLLMNELGVPFHLGTKQVCVAWSSSSCHDGKAWLHVCVTGDDRNATASFIYDGRLVDSIGSWSQNILRTQESECVCINGTCTVVMTDGSASGRADTRILFIKEGKIVHISPLSGSAQHIEECSCYPRYPDVRCICRDNWKGSNRPVIDINMEDYSIDSSYVCSGLVGDTPRNDDSSSNSNCRDPNNERGNPGVKGWAFDNGDDVWMGRTINKESRSGYETFKVIGGWSTPNSKSQVNRQVIVDNNNWSGYSGIFSVEGKSCINRCFYVELIRGRPQETRVWWTSNSIVVFCGTSGTYGTGSWPDGANINFMPI</sequence>
<reference key="1">
    <citation type="journal article" date="1982" name="Nucleic Acids Res.">
        <title>Neuraminidase gene from the early Asian strain of human influenza virus, A/RI/5-/57 (H2N2).</title>
        <authorList>
            <person name="Elleman T.C."/>
            <person name="Azad A.A."/>
            <person name="Ward C.W."/>
        </authorList>
    </citation>
    <scope>NUCLEOTIDE SEQUENCE [GENOMIC RNA]</scope>
</reference>
<reference key="2">
    <citation type="journal article" date="2004" name="Virus Res.">
        <title>Assembly and budding of influenza virus.</title>
        <authorList>
            <person name="Nayak D.P."/>
            <person name="Hui E.K."/>
            <person name="Barman S."/>
        </authorList>
    </citation>
    <scope>REVIEW</scope>
</reference>
<reference key="3">
    <citation type="journal article" date="2005" name="N. Engl. J. Med.">
        <title>Neuraminidase inhibitors for influenza.</title>
        <authorList>
            <person name="Moscona A."/>
        </authorList>
    </citation>
    <scope>REVIEW</scope>
</reference>
<reference key="4">
    <citation type="journal article" date="2005" name="Biol. Pharm. Bull.">
        <title>Sialobiology of influenza: molecular mechanism of host range variation of influenza viruses.</title>
        <authorList>
            <person name="Suzuki Y."/>
        </authorList>
    </citation>
    <scope>REVIEW</scope>
</reference>
<evidence type="ECO:0000255" key="1">
    <source>
        <dbReference type="HAMAP-Rule" id="MF_04071"/>
    </source>
</evidence>
<evidence type="ECO:0000256" key="2">
    <source>
        <dbReference type="SAM" id="MobiDB-lite"/>
    </source>
</evidence>
<dbReference type="EC" id="3.2.1.18" evidence="1"/>
<dbReference type="EMBL" id="J02156">
    <property type="protein sequence ID" value="AAA43413.1"/>
    <property type="molecule type" value="Genomic_RNA"/>
</dbReference>
<dbReference type="SMR" id="P03484"/>
<dbReference type="CAZy" id="GH34">
    <property type="family name" value="Glycoside Hydrolase Family 34"/>
</dbReference>
<dbReference type="GlyCosmos" id="P03484">
    <property type="glycosylation" value="8 sites, No reported glycans"/>
</dbReference>
<dbReference type="ABCD" id="P03484">
    <property type="antibodies" value="1 sequenced antibody"/>
</dbReference>
<dbReference type="GO" id="GO:0020002">
    <property type="term" value="C:host cell plasma membrane"/>
    <property type="evidence" value="ECO:0007669"/>
    <property type="project" value="UniProtKB-SubCell"/>
</dbReference>
<dbReference type="GO" id="GO:0016020">
    <property type="term" value="C:membrane"/>
    <property type="evidence" value="ECO:0007669"/>
    <property type="project" value="UniProtKB-UniRule"/>
</dbReference>
<dbReference type="GO" id="GO:0055036">
    <property type="term" value="C:virion membrane"/>
    <property type="evidence" value="ECO:0007669"/>
    <property type="project" value="UniProtKB-SubCell"/>
</dbReference>
<dbReference type="GO" id="GO:0004308">
    <property type="term" value="F:exo-alpha-sialidase activity"/>
    <property type="evidence" value="ECO:0007669"/>
    <property type="project" value="UniProtKB-UniRule"/>
</dbReference>
<dbReference type="GO" id="GO:0046872">
    <property type="term" value="F:metal ion binding"/>
    <property type="evidence" value="ECO:0007669"/>
    <property type="project" value="UniProtKB-UniRule"/>
</dbReference>
<dbReference type="GO" id="GO:0005975">
    <property type="term" value="P:carbohydrate metabolic process"/>
    <property type="evidence" value="ECO:0007669"/>
    <property type="project" value="InterPro"/>
</dbReference>
<dbReference type="GO" id="GO:0046761">
    <property type="term" value="P:viral budding from plasma membrane"/>
    <property type="evidence" value="ECO:0007669"/>
    <property type="project" value="UniProtKB-UniRule"/>
</dbReference>
<dbReference type="CDD" id="cd15483">
    <property type="entry name" value="Influenza_NA"/>
    <property type="match status" value="1"/>
</dbReference>
<dbReference type="Gene3D" id="2.120.10.10">
    <property type="match status" value="1"/>
</dbReference>
<dbReference type="HAMAP" id="MF_04071">
    <property type="entry name" value="INFV_NRAM"/>
    <property type="match status" value="1"/>
</dbReference>
<dbReference type="InterPro" id="IPR001860">
    <property type="entry name" value="Glyco_hydro_34"/>
</dbReference>
<dbReference type="InterPro" id="IPR033654">
    <property type="entry name" value="Sialidase_Influenza_A/B"/>
</dbReference>
<dbReference type="InterPro" id="IPR036278">
    <property type="entry name" value="Sialidase_sf"/>
</dbReference>
<dbReference type="Pfam" id="PF00064">
    <property type="entry name" value="Neur"/>
    <property type="match status" value="1"/>
</dbReference>
<dbReference type="SUPFAM" id="SSF50939">
    <property type="entry name" value="Sialidases"/>
    <property type="match status" value="1"/>
</dbReference>
<gene>
    <name evidence="1" type="primary">NA</name>
</gene>
<keyword id="KW-0106">Calcium</keyword>
<keyword id="KW-1015">Disulfide bond</keyword>
<keyword id="KW-0325">Glycoprotein</keyword>
<keyword id="KW-0326">Glycosidase</keyword>
<keyword id="KW-1032">Host cell membrane</keyword>
<keyword id="KW-1043">Host membrane</keyword>
<keyword id="KW-0378">Hydrolase</keyword>
<keyword id="KW-0472">Membrane</keyword>
<keyword id="KW-0479">Metal-binding</keyword>
<keyword id="KW-0735">Signal-anchor</keyword>
<keyword id="KW-0812">Transmembrane</keyword>
<keyword id="KW-1133">Transmembrane helix</keyword>
<keyword id="KW-0946">Virion</keyword>
<protein>
    <recommendedName>
        <fullName evidence="1">Neuraminidase</fullName>
        <ecNumber evidence="1">3.2.1.18</ecNumber>
    </recommendedName>
</protein>
<organism>
    <name type="scientific">Influenza A virus (strain A/RI/5-/1957 H2N2)</name>
    <dbReference type="NCBI Taxonomy" id="382828"/>
    <lineage>
        <taxon>Viruses</taxon>
        <taxon>Riboviria</taxon>
        <taxon>Orthornavirae</taxon>
        <taxon>Negarnaviricota</taxon>
        <taxon>Polyploviricotina</taxon>
        <taxon>Insthoviricetes</taxon>
        <taxon>Articulavirales</taxon>
        <taxon>Orthomyxoviridae</taxon>
        <taxon>Alphainfluenzavirus</taxon>
        <taxon>Alphainfluenzavirus influenzae</taxon>
        <taxon>Influenza A virus</taxon>
    </lineage>
</organism>
<proteinExistence type="inferred from homology"/>
<accession>P03484</accession>
<feature type="chain" id="PRO_0000078714" description="Neuraminidase">
    <location>
        <begin position="1"/>
        <end position="469"/>
    </location>
</feature>
<feature type="topological domain" description="Intravirion" evidence="1">
    <location>
        <begin position="1"/>
        <end position="6"/>
    </location>
</feature>
<feature type="transmembrane region" description="Helical" evidence="1">
    <location>
        <begin position="7"/>
        <end position="29"/>
    </location>
</feature>
<feature type="topological domain" description="Virion surface" evidence="1">
    <location>
        <begin position="30"/>
        <end position="469"/>
    </location>
</feature>
<feature type="region of interest" description="Involved in apical transport and lipid raft association" evidence="1">
    <location>
        <begin position="11"/>
        <end position="33"/>
    </location>
</feature>
<feature type="region of interest" description="Hypervariable stalk region" evidence="1">
    <location>
        <begin position="36"/>
        <end position="88"/>
    </location>
</feature>
<feature type="region of interest" description="Head of neuraminidase" evidence="1">
    <location>
        <begin position="91"/>
        <end position="469"/>
    </location>
</feature>
<feature type="region of interest" description="Disordered" evidence="2">
    <location>
        <begin position="325"/>
        <end position="349"/>
    </location>
</feature>
<feature type="active site" description="Proton donor/acceptor" evidence="1">
    <location>
        <position position="151"/>
    </location>
</feature>
<feature type="active site" description="Nucleophile" evidence="1">
    <location>
        <position position="406"/>
    </location>
</feature>
<feature type="binding site" evidence="1">
    <location>
        <position position="118"/>
    </location>
    <ligand>
        <name>substrate</name>
    </ligand>
</feature>
<feature type="binding site" evidence="1">
    <location>
        <position position="152"/>
    </location>
    <ligand>
        <name>substrate</name>
    </ligand>
</feature>
<feature type="binding site" evidence="1">
    <location>
        <begin position="276"/>
        <end position="277"/>
    </location>
    <ligand>
        <name>substrate</name>
    </ligand>
</feature>
<feature type="binding site" evidence="1">
    <location>
        <position position="292"/>
    </location>
    <ligand>
        <name>substrate</name>
    </ligand>
</feature>
<feature type="binding site" evidence="1">
    <location>
        <position position="293"/>
    </location>
    <ligand>
        <name>Ca(2+)</name>
        <dbReference type="ChEBI" id="CHEBI:29108"/>
    </ligand>
</feature>
<feature type="binding site" evidence="1">
    <location>
        <position position="297"/>
    </location>
    <ligand>
        <name>Ca(2+)</name>
        <dbReference type="ChEBI" id="CHEBI:29108"/>
    </ligand>
</feature>
<feature type="binding site" evidence="1">
    <location>
        <position position="324"/>
    </location>
    <ligand>
        <name>Ca(2+)</name>
        <dbReference type="ChEBI" id="CHEBI:29108"/>
    </ligand>
</feature>
<feature type="binding site" evidence="1">
    <location>
        <position position="371"/>
    </location>
    <ligand>
        <name>substrate</name>
    </ligand>
</feature>
<feature type="glycosylation site" description="N-linked (GlcNAc...) asparagine; by host" evidence="1">
    <location>
        <position position="61"/>
    </location>
</feature>
<feature type="glycosylation site" description="N-linked (GlcNAc...) asparagine; by host" evidence="1">
    <location>
        <position position="69"/>
    </location>
</feature>
<feature type="glycosylation site" description="N-linked (GlcNAc...) asparagine; by host" evidence="1">
    <location>
        <position position="70"/>
    </location>
</feature>
<feature type="glycosylation site" description="N-linked (GlcNAc...) asparagine; by host" evidence="1">
    <location>
        <position position="86"/>
    </location>
</feature>
<feature type="glycosylation site" description="N-linked (GlcNAc...) asparagine; by host" evidence="1">
    <location>
        <position position="146"/>
    </location>
</feature>
<feature type="glycosylation site" description="N-linked (GlcNAc...) asparagine; by host" evidence="1">
    <location>
        <position position="200"/>
    </location>
</feature>
<feature type="glycosylation site" description="N-linked (GlcNAc...) asparagine; by host" evidence="1">
    <location>
        <position position="234"/>
    </location>
</feature>
<feature type="glycosylation site" description="N-linked (GlcNAc...) asparagine; by host" evidence="1">
    <location>
        <position position="402"/>
    </location>
</feature>
<feature type="disulfide bond" evidence="1">
    <location>
        <begin position="92"/>
        <end position="417"/>
    </location>
</feature>
<feature type="disulfide bond" evidence="1">
    <location>
        <begin position="124"/>
        <end position="129"/>
    </location>
</feature>
<feature type="disulfide bond" evidence="1">
    <location>
        <begin position="183"/>
        <end position="230"/>
    </location>
</feature>
<feature type="disulfide bond" evidence="1">
    <location>
        <begin position="232"/>
        <end position="237"/>
    </location>
</feature>
<feature type="disulfide bond" evidence="1">
    <location>
        <begin position="278"/>
        <end position="291"/>
    </location>
</feature>
<feature type="disulfide bond" evidence="1">
    <location>
        <begin position="280"/>
        <end position="289"/>
    </location>
</feature>
<feature type="disulfide bond" evidence="1">
    <location>
        <begin position="318"/>
        <end position="337"/>
    </location>
</feature>
<feature type="disulfide bond" evidence="1">
    <location>
        <begin position="421"/>
        <end position="447"/>
    </location>
</feature>
<comment type="function">
    <text evidence="1">Catalyzes the removal of terminal sialic acid residues from viral and cellular glycoconjugates. Cleaves off the terminal sialic acids on the glycosylated HA during virus budding to facilitate virus release. Additionally helps virus spread through the circulation by further removing sialic acids from the cell surface. These cleavages prevent self-aggregation and ensure the efficient spread of the progeny virus from cell to cell. Otherwise, infection would be limited to one round of replication. Described as a receptor-destroying enzyme because it cleaves a terminal sialic acid from the cellular receptors. May facilitate viral invasion of the upper airways by cleaving the sialic acid moieties on the mucin of the airway epithelial cells. Likely to plays a role in the budding process through its association with lipid rafts during intracellular transport. May additionally display a raft-association independent effect on budding. Plays a role in the determination of host range restriction on replication and virulence. Sialidase activity in late endosome/lysosome traffic seems to enhance virus replication.</text>
</comment>
<comment type="catalytic activity">
    <reaction evidence="1">
        <text>Hydrolysis of alpha-(2-&gt;3)-, alpha-(2-&gt;6)-, alpha-(2-&gt;8)- glycosidic linkages of terminal sialic acid residues in oligosaccharides, glycoproteins, glycolipids, colominic acid and synthetic substrates.</text>
        <dbReference type="EC" id="3.2.1.18"/>
    </reaction>
</comment>
<comment type="cofactor">
    <cofactor evidence="1">
        <name>Ca(2+)</name>
        <dbReference type="ChEBI" id="CHEBI:29108"/>
    </cofactor>
</comment>
<comment type="activity regulation">
    <text evidence="1">Inhibited by the neuraminidase inhibitors zanamivir (Relenza) and oseltamivir (Tamiflu). These drugs interfere with the release of progeny virus from infected cells and are effective against all influenza strains. Resistance to neuraminidase inhibitors is quite rare.</text>
</comment>
<comment type="subunit">
    <text evidence="1">Homotetramer.</text>
</comment>
<comment type="subcellular location">
    <subcellularLocation>
        <location evidence="1">Virion membrane</location>
    </subcellularLocation>
    <subcellularLocation>
        <location evidence="1">Host apical cell membrane</location>
        <topology evidence="1">Single-pass type II membrane protein</topology>
    </subcellularLocation>
    <text evidence="1">Preferentially accumulates at the apical plasma membrane in infected polarized epithelial cells, which is the virus assembly site. Uses lipid rafts for cell surface transport and apical sorting. In the virion, forms a mushroom-shaped spike on the surface of the membrane.</text>
</comment>
<comment type="domain">
    <text evidence="1">Intact N-terminus is essential for virion morphogenesis. Possesses two apical sorting signals, one in the ectodomain, which is likely to be a glycan, and the other in the transmembrane domain. The transmembrane domain also plays a role in lipid raft association.</text>
</comment>
<comment type="PTM">
    <text evidence="1">N-glycosylated.</text>
</comment>
<comment type="miscellaneous">
    <text>The influenza A genome consist of 8 RNA segments. Genetic variation of hemagglutinin and/or neuraminidase genes results in the emergence of new influenza strains. The mechanism of variation can be the result of point mutations or the result of genetic reassortment between segments of two different strains.</text>
</comment>
<comment type="similarity">
    <text evidence="1">Belongs to the glycosyl hydrolase 34 family.</text>
</comment>
<organismHost>
    <name type="scientific">Aves</name>
    <dbReference type="NCBI Taxonomy" id="8782"/>
</organismHost>
<organismHost>
    <name type="scientific">Homo sapiens</name>
    <name type="common">Human</name>
    <dbReference type="NCBI Taxonomy" id="9606"/>
</organismHost>